<feature type="chain" id="PRO_0000051408" description="U3 small nucleolar RNA-associated protein 18 homolog">
    <location>
        <begin position="1"/>
        <end position="429"/>
    </location>
</feature>
<feature type="repeat" description="WD 1">
    <location>
        <begin position="117"/>
        <end position="156"/>
    </location>
</feature>
<feature type="repeat" description="WD 2">
    <location>
        <begin position="295"/>
        <end position="336"/>
    </location>
</feature>
<feature type="repeat" description="WD 3">
    <location>
        <begin position="345"/>
        <end position="386"/>
    </location>
</feature>
<feature type="repeat" description="WD 4">
    <location>
        <begin position="392"/>
        <end position="428"/>
    </location>
</feature>
<protein>
    <recommendedName>
        <fullName>U3 small nucleolar RNA-associated protein 18 homolog</fullName>
    </recommendedName>
</protein>
<proteinExistence type="inferred from homology"/>
<evidence type="ECO:0000250" key="1"/>
<evidence type="ECO:0000305" key="2"/>
<keyword id="KW-0539">Nucleus</keyword>
<keyword id="KW-1185">Reference proteome</keyword>
<keyword id="KW-0677">Repeat</keyword>
<keyword id="KW-0698">rRNA processing</keyword>
<keyword id="KW-0853">WD repeat</keyword>
<reference key="1">
    <citation type="journal article" date="1998" name="Science">
        <title>Genome sequence of the nematode C. elegans: a platform for investigating biology.</title>
        <authorList>
            <consortium name="The C. elegans sequencing consortium"/>
        </authorList>
    </citation>
    <scope>NUCLEOTIDE SEQUENCE [LARGE SCALE GENOMIC DNA]</scope>
    <source>
        <strain>Bristol N2</strain>
    </source>
</reference>
<gene>
    <name type="ORF">B0280.9</name>
</gene>
<name>UTP18_CAEEL</name>
<accession>P42000</accession>
<sequence length="429" mass="47772">MSKRPVIESEKPAWHDEDDDNMVVAVPKKVKMTMRVELKRTTDEEHGELDSKEYVGRLQEAFRKRHGGTPKWAKAAAGDEEEGSLLKTAAGYLAKDVNLPKTTIHTTLIKDFNIGHRYTRGITVVKFHKTRPVLIVADQGGNVQLFKVSREVKKDRFLQSANFSKFPIDSLEIADKGHSVICSSSRKEYLMQYNMETREVTQLKPPNTVPKQGIRLFAISHDSQFLAIAGHNSHIYVLHATSMEHITTISLPANASEIKFFPSHSREIWIICETGQIVIANIGLPGTKSSQHTFTDDGAVHGTTLAISQHGDYFATGSDTGIVNVYSGNDCRNSTNPRPLFNVSNLVTAVSSIAFNSDAQLMAICSNVKDNHLRLVHVASQTTFKNFPERNGKVTHARCVEFSPNGGYMAVGNDDGRLHVFEIHHFTDY</sequence>
<dbReference type="EMBL" id="FO080148">
    <property type="protein sequence ID" value="CCD61605.1"/>
    <property type="molecule type" value="Genomic_DNA"/>
</dbReference>
<dbReference type="PIR" id="T15303">
    <property type="entry name" value="T15303"/>
</dbReference>
<dbReference type="RefSeq" id="NP_498555.1">
    <property type="nucleotide sequence ID" value="NM_066154.6"/>
</dbReference>
<dbReference type="SMR" id="P42000"/>
<dbReference type="BioGRID" id="41206">
    <property type="interactions" value="13"/>
</dbReference>
<dbReference type="FunCoup" id="P42000">
    <property type="interactions" value="2884"/>
</dbReference>
<dbReference type="STRING" id="6239.B0280.9.1"/>
<dbReference type="PaxDb" id="6239-B0280.9"/>
<dbReference type="PeptideAtlas" id="P42000"/>
<dbReference type="EnsemblMetazoa" id="B0280.9.1">
    <property type="protein sequence ID" value="B0280.9.1"/>
    <property type="gene ID" value="WBGene00015104"/>
</dbReference>
<dbReference type="GeneID" id="175994"/>
<dbReference type="KEGG" id="cel:CELE_B0280.9"/>
<dbReference type="UCSC" id="B0280.9">
    <property type="organism name" value="c. elegans"/>
</dbReference>
<dbReference type="AGR" id="WB:WBGene00015104"/>
<dbReference type="CTD" id="175994"/>
<dbReference type="WormBase" id="B0280.9">
    <property type="protein sequence ID" value="CE00816"/>
    <property type="gene ID" value="WBGene00015104"/>
</dbReference>
<dbReference type="eggNOG" id="KOG2055">
    <property type="taxonomic scope" value="Eukaryota"/>
</dbReference>
<dbReference type="GeneTree" id="ENSGT00940000165670"/>
<dbReference type="HOGENOM" id="CLU_011055_3_0_1"/>
<dbReference type="InParanoid" id="P42000"/>
<dbReference type="OMA" id="DLNRATY"/>
<dbReference type="OrthoDB" id="1935146at2759"/>
<dbReference type="PhylomeDB" id="P42000"/>
<dbReference type="Reactome" id="R-CEL-6791226">
    <property type="pathway name" value="Major pathway of rRNA processing in the nucleolus and cytosol"/>
</dbReference>
<dbReference type="PRO" id="PR:P42000"/>
<dbReference type="Proteomes" id="UP000001940">
    <property type="component" value="Chromosome III"/>
</dbReference>
<dbReference type="Bgee" id="WBGene00015104">
    <property type="expression patterns" value="Expressed in germ line (C elegans) and 4 other cell types or tissues"/>
</dbReference>
<dbReference type="GO" id="GO:0034388">
    <property type="term" value="C:Pwp2p-containing subcomplex of 90S preribosome"/>
    <property type="evidence" value="ECO:0000318"/>
    <property type="project" value="GO_Central"/>
</dbReference>
<dbReference type="GO" id="GO:0032040">
    <property type="term" value="C:small-subunit processome"/>
    <property type="evidence" value="ECO:0000318"/>
    <property type="project" value="GO_Central"/>
</dbReference>
<dbReference type="GO" id="GO:0006364">
    <property type="term" value="P:rRNA processing"/>
    <property type="evidence" value="ECO:0007669"/>
    <property type="project" value="UniProtKB-KW"/>
</dbReference>
<dbReference type="FunFam" id="2.130.10.10:FF:002252">
    <property type="entry name" value="U3 small nucleolar RNA-associated protein 18 homolog"/>
    <property type="match status" value="1"/>
</dbReference>
<dbReference type="Gene3D" id="2.130.10.10">
    <property type="entry name" value="YVTN repeat-like/Quinoprotein amine dehydrogenase"/>
    <property type="match status" value="1"/>
</dbReference>
<dbReference type="InterPro" id="IPR045161">
    <property type="entry name" value="Utp18"/>
</dbReference>
<dbReference type="InterPro" id="IPR015943">
    <property type="entry name" value="WD40/YVTN_repeat-like_dom_sf"/>
</dbReference>
<dbReference type="InterPro" id="IPR036322">
    <property type="entry name" value="WD40_repeat_dom_sf"/>
</dbReference>
<dbReference type="InterPro" id="IPR001680">
    <property type="entry name" value="WD40_rpt"/>
</dbReference>
<dbReference type="PANTHER" id="PTHR18359:SF0">
    <property type="entry name" value="U3 SMALL NUCLEOLAR RNA-ASSOCIATED PROTEIN 18 HOMOLOG"/>
    <property type="match status" value="1"/>
</dbReference>
<dbReference type="PANTHER" id="PTHR18359">
    <property type="entry name" value="WD-REPEAT PROTEIN-RELATED"/>
    <property type="match status" value="1"/>
</dbReference>
<dbReference type="Pfam" id="PF00400">
    <property type="entry name" value="WD40"/>
    <property type="match status" value="2"/>
</dbReference>
<dbReference type="SMART" id="SM00320">
    <property type="entry name" value="WD40"/>
    <property type="match status" value="5"/>
</dbReference>
<dbReference type="SUPFAM" id="SSF50978">
    <property type="entry name" value="WD40 repeat-like"/>
    <property type="match status" value="1"/>
</dbReference>
<comment type="function">
    <text evidence="1">Involved in nucleolar processing of pre-18S ribosomal RNA.</text>
</comment>
<comment type="subcellular location">
    <subcellularLocation>
        <location evidence="1">Nucleus</location>
        <location evidence="1">Nucleolus</location>
    </subcellularLocation>
</comment>
<comment type="similarity">
    <text evidence="2">Belongs to the WD repeat UTP18 family.</text>
</comment>
<organism>
    <name type="scientific">Caenorhabditis elegans</name>
    <dbReference type="NCBI Taxonomy" id="6239"/>
    <lineage>
        <taxon>Eukaryota</taxon>
        <taxon>Metazoa</taxon>
        <taxon>Ecdysozoa</taxon>
        <taxon>Nematoda</taxon>
        <taxon>Chromadorea</taxon>
        <taxon>Rhabditida</taxon>
        <taxon>Rhabditina</taxon>
        <taxon>Rhabditomorpha</taxon>
        <taxon>Rhabditoidea</taxon>
        <taxon>Rhabditidae</taxon>
        <taxon>Peloderinae</taxon>
        <taxon>Caenorhabditis</taxon>
    </lineage>
</organism>